<proteinExistence type="inferred from homology"/>
<dbReference type="EMBL" id="M26077">
    <property type="status" value="NOT_ANNOTATED_CDS"/>
    <property type="molecule type" value="Genomic_RNA"/>
</dbReference>
<dbReference type="SMR" id="P0DJV1"/>
<dbReference type="GO" id="GO:0003723">
    <property type="term" value="F:RNA binding"/>
    <property type="evidence" value="ECO:0007669"/>
    <property type="project" value="InterPro"/>
</dbReference>
<dbReference type="GO" id="GO:0039694">
    <property type="term" value="P:viral RNA genome replication"/>
    <property type="evidence" value="ECO:0007669"/>
    <property type="project" value="InterPro"/>
</dbReference>
<dbReference type="GO" id="GO:0075523">
    <property type="term" value="P:viral translational frameshifting"/>
    <property type="evidence" value="ECO:0007669"/>
    <property type="project" value="UniProtKB-KW"/>
</dbReference>
<dbReference type="FunFam" id="3.40.91.90:FF:000001">
    <property type="entry name" value="Polymerase acidic protein"/>
    <property type="match status" value="1"/>
</dbReference>
<dbReference type="Gene3D" id="3.40.91.90">
    <property type="entry name" value="Influenza RNA-dependent RNA polymerase subunit PA, endonuclease domain"/>
    <property type="match status" value="1"/>
</dbReference>
<dbReference type="InterPro" id="IPR001009">
    <property type="entry name" value="PA/PA-X"/>
</dbReference>
<dbReference type="InterPro" id="IPR038372">
    <property type="entry name" value="PA/PA-X_sf"/>
</dbReference>
<dbReference type="Pfam" id="PF00603">
    <property type="entry name" value="Flu_PA"/>
    <property type="match status" value="1"/>
</dbReference>
<feature type="chain" id="PRO_0000419414" description="Protein PA-X">
    <location>
        <begin position="1"/>
        <end position="252"/>
    </location>
</feature>
<feature type="active site" evidence="2">
    <location>
        <position position="80"/>
    </location>
</feature>
<feature type="active site" evidence="2">
    <location>
        <position position="108"/>
    </location>
</feature>
<feature type="site" description="Important for efficient shutoff activity and nuclear localization" evidence="4">
    <location>
        <position position="195"/>
    </location>
</feature>
<feature type="site" description="Important for efficient shutoff activity and nuclear localization" evidence="4">
    <location>
        <position position="198"/>
    </location>
</feature>
<feature type="site" description="Important for efficient shutoff activity and nuclear localization" evidence="4">
    <location>
        <position position="199"/>
    </location>
</feature>
<feature type="site" description="Important for efficient shutoff activity" evidence="3">
    <location>
        <position position="202"/>
    </location>
</feature>
<feature type="site" description="Important for efficient shutoff activity" evidence="3">
    <location>
        <position position="203"/>
    </location>
</feature>
<feature type="site" description="Important for efficient shutoff activity" evidence="3">
    <location>
        <position position="206"/>
    </location>
</feature>
<reference key="1">
    <citation type="journal article" date="1989" name="Virology">
        <title>Evolutionary pathways of the PA genes of influenza A viruses.</title>
        <authorList>
            <person name="Okazaki K."/>
            <person name="Kawaoka Y."/>
            <person name="Webster R.G."/>
        </authorList>
    </citation>
    <scope>NUCLEOTIDE SEQUENCE [GENOMIC RNA]</scope>
</reference>
<name>PAX_I77AD</name>
<organismHost>
    <name type="scientific">Aves</name>
    <dbReference type="NCBI Taxonomy" id="8782"/>
</organismHost>
<organismHost>
    <name type="scientific">Homo sapiens</name>
    <name type="common">Human</name>
    <dbReference type="NCBI Taxonomy" id="9606"/>
</organismHost>
<organismHost>
    <name type="scientific">Sus scrofa</name>
    <name type="common">Pig</name>
    <dbReference type="NCBI Taxonomy" id="9823"/>
</organismHost>
<organism>
    <name type="scientific">Influenza A virus (strain A/Swine/Tennessee/26/1977 H1N1)</name>
    <dbReference type="NCBI Taxonomy" id="384479"/>
    <lineage>
        <taxon>Viruses</taxon>
        <taxon>Riboviria</taxon>
        <taxon>Orthornavirae</taxon>
        <taxon>Negarnaviricota</taxon>
        <taxon>Polyploviricotina</taxon>
        <taxon>Insthoviricetes</taxon>
        <taxon>Articulavirales</taxon>
        <taxon>Orthomyxoviridae</taxon>
        <taxon>Alphainfluenzavirus</taxon>
        <taxon>Alphainfluenzavirus influenzae</taxon>
        <taxon>Influenza A virus</taxon>
    </lineage>
</organism>
<gene>
    <name type="primary">PA</name>
</gene>
<sequence length="252" mass="29405">MEDFVRQCFNPMIVELAEKTMKEYGENPKIETNKFAAICTHMEVCFMYSDFHFINERGESIIIEPGDSNALLKHRFEIIEGRDRNMAWTVVNSICNTTGVGKPRFLPDLYDYKEDRFIKIGVTRREVHIYYLEKANKIKSEETHIHIFSFTGEEMATKADYTLDEESRARIKTRLFTIRQEMASRGLWDSFVSPREAKRQLKKDLKSKGQCEGLLTKVSHQTSQVSTTLEPMWMDSSRMATLRASFPKCLEK</sequence>
<accession>P0DJV1</accession>
<evidence type="ECO:0000250" key="1">
    <source>
        <dbReference type="UniProtKB" id="P0CK64"/>
    </source>
</evidence>
<evidence type="ECO:0000250" key="2">
    <source>
        <dbReference type="UniProtKB" id="P0CK68"/>
    </source>
</evidence>
<evidence type="ECO:0000250" key="3">
    <source>
        <dbReference type="UniProtKB" id="P0DJW8"/>
    </source>
</evidence>
<evidence type="ECO:0000250" key="4">
    <source>
        <dbReference type="UniProtKB" id="P0DXO5"/>
    </source>
</evidence>
<evidence type="ECO:0000305" key="5"/>
<keyword id="KW-1132">Decay of host mRNAs by virus</keyword>
<keyword id="KW-1262">Eukaryotic host gene expression shutoff by virus</keyword>
<keyword id="KW-1035">Host cytoplasm</keyword>
<keyword id="KW-1190">Host gene expression shutoff by virus</keyword>
<keyword id="KW-1192">Host mRNA suppression by virus</keyword>
<keyword id="KW-1048">Host nucleus</keyword>
<keyword id="KW-0945">Host-virus interaction</keyword>
<keyword id="KW-0688">Ribosomal frameshifting</keyword>
<protein>
    <recommendedName>
        <fullName>Protein PA-X</fullName>
    </recommendedName>
</protein>
<comment type="function">
    <text evidence="1 4">Plays a major role in the shutoff of the host protein expression by cleaving mRNAs probably via an endonuclease activity. This host shutoff allows the virus to escape from the host antiviral response (By similarity). Hijacks host RNA splicing machinery to selectively target host RNAs containing introns for destruction. This may explain the preferential degradation of RNAs that have undergone co- or post-transcriptional processing (By similarity).</text>
</comment>
<comment type="subcellular location">
    <subcellularLocation>
        <location evidence="4">Host cytoplasm</location>
    </subcellularLocation>
    <subcellularLocation>
        <location evidence="4">Host nucleus</location>
    </subcellularLocation>
</comment>
<comment type="alternative products">
    <event type="ribosomal frameshifting"/>
    <isoform>
        <id>P0DJV1-1</id>
        <name>PA-X</name>
        <sequence type="displayed"/>
    </isoform>
    <isoform>
        <id>P13177-1</id>
        <name>PA</name>
        <sequence type="external"/>
    </isoform>
</comment>
<comment type="domain">
    <text evidence="1 4">The probable endonuclease active site in the N-terminus and the basic amino acid cluster in the C-terminus are important for the shutoff activity. The C-terminus acts as a nuclear localization signal (By similarity). The C-terminus is recruited to host protein complexes involved in nuclear Pol II RNA processing (By similarity).</text>
</comment>
<comment type="similarity">
    <text evidence="5">Belongs to the influenza viruses PA-X family.</text>
</comment>